<dbReference type="EC" id="6.1.1.21"/>
<dbReference type="EMBL" id="BA000017">
    <property type="protein sequence ID" value="BAB57793.1"/>
    <property type="molecule type" value="Genomic_DNA"/>
</dbReference>
<dbReference type="RefSeq" id="WP_000590826.1">
    <property type="nucleotide sequence ID" value="NC_002758.2"/>
</dbReference>
<dbReference type="SMR" id="P60909"/>
<dbReference type="KEGG" id="sav:SAV1631"/>
<dbReference type="HOGENOM" id="CLU_025113_1_1_9"/>
<dbReference type="PhylomeDB" id="P60909"/>
<dbReference type="Proteomes" id="UP000002481">
    <property type="component" value="Chromosome"/>
</dbReference>
<dbReference type="GO" id="GO:0005737">
    <property type="term" value="C:cytoplasm"/>
    <property type="evidence" value="ECO:0007669"/>
    <property type="project" value="UniProtKB-SubCell"/>
</dbReference>
<dbReference type="GO" id="GO:0005524">
    <property type="term" value="F:ATP binding"/>
    <property type="evidence" value="ECO:0007669"/>
    <property type="project" value="UniProtKB-UniRule"/>
</dbReference>
<dbReference type="GO" id="GO:0140096">
    <property type="term" value="F:catalytic activity, acting on a protein"/>
    <property type="evidence" value="ECO:0007669"/>
    <property type="project" value="UniProtKB-ARBA"/>
</dbReference>
<dbReference type="GO" id="GO:0004821">
    <property type="term" value="F:histidine-tRNA ligase activity"/>
    <property type="evidence" value="ECO:0007669"/>
    <property type="project" value="UniProtKB-UniRule"/>
</dbReference>
<dbReference type="GO" id="GO:0016740">
    <property type="term" value="F:transferase activity"/>
    <property type="evidence" value="ECO:0007669"/>
    <property type="project" value="UniProtKB-ARBA"/>
</dbReference>
<dbReference type="GO" id="GO:0006427">
    <property type="term" value="P:histidyl-tRNA aminoacylation"/>
    <property type="evidence" value="ECO:0007669"/>
    <property type="project" value="UniProtKB-UniRule"/>
</dbReference>
<dbReference type="CDD" id="cd00738">
    <property type="entry name" value="HGTP_anticodon"/>
    <property type="match status" value="1"/>
</dbReference>
<dbReference type="CDD" id="cd00773">
    <property type="entry name" value="HisRS-like_core"/>
    <property type="match status" value="1"/>
</dbReference>
<dbReference type="FunFam" id="3.30.930.10:FF:000005">
    <property type="entry name" value="Histidine--tRNA ligase"/>
    <property type="match status" value="1"/>
</dbReference>
<dbReference type="Gene3D" id="3.40.50.800">
    <property type="entry name" value="Anticodon-binding domain"/>
    <property type="match status" value="1"/>
</dbReference>
<dbReference type="Gene3D" id="3.30.930.10">
    <property type="entry name" value="Bira Bifunctional Protein, Domain 2"/>
    <property type="match status" value="1"/>
</dbReference>
<dbReference type="HAMAP" id="MF_00127">
    <property type="entry name" value="His_tRNA_synth"/>
    <property type="match status" value="1"/>
</dbReference>
<dbReference type="InterPro" id="IPR006195">
    <property type="entry name" value="aa-tRNA-synth_II"/>
</dbReference>
<dbReference type="InterPro" id="IPR045864">
    <property type="entry name" value="aa-tRNA-synth_II/BPL/LPL"/>
</dbReference>
<dbReference type="InterPro" id="IPR004154">
    <property type="entry name" value="Anticodon-bd"/>
</dbReference>
<dbReference type="InterPro" id="IPR036621">
    <property type="entry name" value="Anticodon-bd_dom_sf"/>
</dbReference>
<dbReference type="InterPro" id="IPR015807">
    <property type="entry name" value="His-tRNA-ligase"/>
</dbReference>
<dbReference type="InterPro" id="IPR041715">
    <property type="entry name" value="HisRS-like_core"/>
</dbReference>
<dbReference type="InterPro" id="IPR004516">
    <property type="entry name" value="HisRS/HisZ"/>
</dbReference>
<dbReference type="NCBIfam" id="TIGR00442">
    <property type="entry name" value="hisS"/>
    <property type="match status" value="1"/>
</dbReference>
<dbReference type="PANTHER" id="PTHR43707:SF1">
    <property type="entry name" value="HISTIDINE--TRNA LIGASE, MITOCHONDRIAL-RELATED"/>
    <property type="match status" value="1"/>
</dbReference>
<dbReference type="PANTHER" id="PTHR43707">
    <property type="entry name" value="HISTIDYL-TRNA SYNTHETASE"/>
    <property type="match status" value="1"/>
</dbReference>
<dbReference type="Pfam" id="PF03129">
    <property type="entry name" value="HGTP_anticodon"/>
    <property type="match status" value="1"/>
</dbReference>
<dbReference type="Pfam" id="PF13393">
    <property type="entry name" value="tRNA-synt_His"/>
    <property type="match status" value="1"/>
</dbReference>
<dbReference type="PIRSF" id="PIRSF001549">
    <property type="entry name" value="His-tRNA_synth"/>
    <property type="match status" value="1"/>
</dbReference>
<dbReference type="SUPFAM" id="SSF52954">
    <property type="entry name" value="Class II aaRS ABD-related"/>
    <property type="match status" value="1"/>
</dbReference>
<dbReference type="SUPFAM" id="SSF55681">
    <property type="entry name" value="Class II aaRS and biotin synthetases"/>
    <property type="match status" value="1"/>
</dbReference>
<dbReference type="PROSITE" id="PS50862">
    <property type="entry name" value="AA_TRNA_LIGASE_II"/>
    <property type="match status" value="1"/>
</dbReference>
<organism>
    <name type="scientific">Staphylococcus aureus (strain Mu50 / ATCC 700699)</name>
    <dbReference type="NCBI Taxonomy" id="158878"/>
    <lineage>
        <taxon>Bacteria</taxon>
        <taxon>Bacillati</taxon>
        <taxon>Bacillota</taxon>
        <taxon>Bacilli</taxon>
        <taxon>Bacillales</taxon>
        <taxon>Staphylococcaceae</taxon>
        <taxon>Staphylococcus</taxon>
    </lineage>
</organism>
<comment type="catalytic activity">
    <reaction>
        <text>tRNA(His) + L-histidine + ATP = L-histidyl-tRNA(His) + AMP + diphosphate + H(+)</text>
        <dbReference type="Rhea" id="RHEA:17313"/>
        <dbReference type="Rhea" id="RHEA-COMP:9665"/>
        <dbReference type="Rhea" id="RHEA-COMP:9689"/>
        <dbReference type="ChEBI" id="CHEBI:15378"/>
        <dbReference type="ChEBI" id="CHEBI:30616"/>
        <dbReference type="ChEBI" id="CHEBI:33019"/>
        <dbReference type="ChEBI" id="CHEBI:57595"/>
        <dbReference type="ChEBI" id="CHEBI:78442"/>
        <dbReference type="ChEBI" id="CHEBI:78527"/>
        <dbReference type="ChEBI" id="CHEBI:456215"/>
        <dbReference type="EC" id="6.1.1.21"/>
    </reaction>
</comment>
<comment type="subunit">
    <text evidence="1">Homodimer.</text>
</comment>
<comment type="subcellular location">
    <subcellularLocation>
        <location evidence="1">Cytoplasm</location>
    </subcellularLocation>
</comment>
<comment type="similarity">
    <text evidence="2">Belongs to the class-II aminoacyl-tRNA synthetase family.</text>
</comment>
<accession>P60909</accession>
<accession>O32422</accession>
<proteinExistence type="inferred from homology"/>
<reference key="1">
    <citation type="journal article" date="2001" name="Lancet">
        <title>Whole genome sequencing of meticillin-resistant Staphylococcus aureus.</title>
        <authorList>
            <person name="Kuroda M."/>
            <person name="Ohta T."/>
            <person name="Uchiyama I."/>
            <person name="Baba T."/>
            <person name="Yuzawa H."/>
            <person name="Kobayashi I."/>
            <person name="Cui L."/>
            <person name="Oguchi A."/>
            <person name="Aoki K."/>
            <person name="Nagai Y."/>
            <person name="Lian J.-Q."/>
            <person name="Ito T."/>
            <person name="Kanamori M."/>
            <person name="Matsumaru H."/>
            <person name="Maruyama A."/>
            <person name="Murakami H."/>
            <person name="Hosoyama A."/>
            <person name="Mizutani-Ui Y."/>
            <person name="Takahashi N.K."/>
            <person name="Sawano T."/>
            <person name="Inoue R."/>
            <person name="Kaito C."/>
            <person name="Sekimizu K."/>
            <person name="Hirakawa H."/>
            <person name="Kuhara S."/>
            <person name="Goto S."/>
            <person name="Yabuzaki J."/>
            <person name="Kanehisa M."/>
            <person name="Yamashita A."/>
            <person name="Oshima K."/>
            <person name="Furuya K."/>
            <person name="Yoshino C."/>
            <person name="Shiba T."/>
            <person name="Hattori M."/>
            <person name="Ogasawara N."/>
            <person name="Hayashi H."/>
            <person name="Hiramatsu K."/>
        </authorList>
    </citation>
    <scope>NUCLEOTIDE SEQUENCE [LARGE SCALE GENOMIC DNA]</scope>
    <source>
        <strain>Mu50 / ATCC 700699</strain>
    </source>
</reference>
<evidence type="ECO:0000250" key="1"/>
<evidence type="ECO:0000305" key="2"/>
<feature type="chain" id="PRO_0000136253" description="Histidine--tRNA ligase">
    <location>
        <begin position="1"/>
        <end position="420"/>
    </location>
</feature>
<feature type="disulfide bond" evidence="1">
    <location>
        <begin position="191"/>
        <end position="194"/>
    </location>
</feature>
<gene>
    <name type="primary">hisS</name>
    <name type="ordered locus">SAV1631</name>
</gene>
<keyword id="KW-0030">Aminoacyl-tRNA synthetase</keyword>
<keyword id="KW-0067">ATP-binding</keyword>
<keyword id="KW-0963">Cytoplasm</keyword>
<keyword id="KW-1015">Disulfide bond</keyword>
<keyword id="KW-0436">Ligase</keyword>
<keyword id="KW-0547">Nucleotide-binding</keyword>
<keyword id="KW-0648">Protein biosynthesis</keyword>
<sequence length="420" mass="48283">MIKIPRGTQDILPEDSKKWRYIENQLDELMTFYNYKEIRTPIFESTDLFARGVGDSTDVVQKEMYTFKDKGDRSITLRPEGTAAVVRSYIEHKMQGNPNQPIKLYYNGPMFRYERKQKGRYRQFNQFGVEAIGAENPSVDAEVLAMVMHIYQSFGLKHLKLVINSVGDMASRKEYNEALVKHFEPVIHEFCSDCQSRLHTNPMRILDCKVDRDKEAIKTAPRITDFLNEESKAYYEQVKAYLDDLGIPYIEDPNLVRGLDYYTHTAFELMMDNPNYDGAITTLCGGGRYNGLLELLDGPSETGIGFALSIERLLLALEEEGIELDIEENLDLFIVTMGDQADRYAVKLLNHLRHNGIKADKDYLQRKIKGQMKQADRLGAKFTIVIGDQELENNKIDVKNMTTGESETIELDALVEYFKK</sequence>
<name>SYH_STAAM</name>
<protein>
    <recommendedName>
        <fullName>Histidine--tRNA ligase</fullName>
        <ecNumber>6.1.1.21</ecNumber>
    </recommendedName>
    <alternativeName>
        <fullName>Histidyl-tRNA synthetase</fullName>
        <shortName>HisRS</shortName>
    </alternativeName>
</protein>